<sequence length="90" mass="10674">MTMPKIMILPDKYPCSITSILITSRCRVTMYNQKNTLYFNQNNPNNHMYSPNQTFNEIHWTSQELIDTIQNFLQHLGIIEDIYTIYILVS</sequence>
<feature type="chain" id="PRO_0000356857" description="Protein M2-2">
    <location>
        <begin position="1"/>
        <end position="90"/>
    </location>
</feature>
<organismHost>
    <name type="scientific">Homo sapiens</name>
    <name type="common">Human</name>
    <dbReference type="NCBI Taxonomy" id="9606"/>
</organismHost>
<reference key="1">
    <citation type="journal article" date="1985" name="J. Virol.">
        <title>mRNA sequence of three respiratory syncytial virus genes encoding two nonstructural proteins and a 22K structural protein.</title>
        <authorList>
            <person name="Elango N."/>
            <person name="Satake M."/>
            <person name="Venkatesan S."/>
        </authorList>
    </citation>
    <scope>NUCLEOTIDE SEQUENCE [GENOMIC RNA]</scope>
</reference>
<reference key="2">
    <citation type="journal article" date="1996" name="Virology">
        <title>Nucleotide sequence analysis of the respiratory syncytial virus subgroup A cold-passaged (cp) temperature sensitive (ts) cpts-248/404 live attenuated virus vaccine candidate.</title>
        <authorList>
            <person name="Firestone C.Y."/>
            <person name="Whitehead S.S."/>
            <person name="Collins P.L."/>
            <person name="Murphy B.R."/>
            <person name="Crowe J.E. Jr."/>
        </authorList>
    </citation>
    <scope>NUCLEOTIDE SEQUENCE [GENOMIC RNA]</scope>
    <source>
        <strain>Cold-passage attenuated</strain>
    </source>
</reference>
<reference key="3">
    <citation type="journal article" date="1996" name="Virus Genes">
        <title>Acquisition of the ts phenotype by a chemically mutagenized cold-passaged human respiratory syncytial virus vaccine candidate results from the acquisition of a single mutation in the polymerase (L) gene.</title>
        <authorList>
            <person name="Crowe J.E. Jr."/>
            <person name="Firestone C.Y."/>
            <person name="Whitehead S.S."/>
            <person name="Collins P.L."/>
            <person name="Murphy B.R."/>
        </authorList>
    </citation>
    <scope>NUCLEOTIDE SEQUENCE [GENOMIC RNA]</scope>
    <source>
        <strain>Cold-passage attenuated</strain>
    </source>
</reference>
<reference key="4">
    <citation type="journal article" date="1995" name="Virology">
        <title>A cold-passaged, attenuated strain of human respiratory syncytial virus contains mutations in the F and L genes.</title>
        <authorList>
            <person name="Connors M."/>
            <person name="Crowe J.E. Jr."/>
            <person name="Firestone C.Y."/>
            <person name="Murphy B.R."/>
            <person name="Collins P.L."/>
        </authorList>
    </citation>
    <scope>NUCLEOTIDE SEQUENCE [GENOMIC RNA]</scope>
    <source>
        <strain>Cold-passage attenuated</strain>
    </source>
</reference>
<reference key="5">
    <citation type="journal article" date="1998" name="J. Virol.">
        <title>Recombinant respiratory syncytial virus (RSV) bearing a set of mutations from cold-passaged RSV is attenuated in chimpanzees.</title>
        <authorList>
            <person name="Whitehead S.S."/>
            <person name="Juhasz K."/>
            <person name="Firestone C.Y."/>
            <person name="Collins P.L."/>
            <person name="Murphy B.R."/>
        </authorList>
    </citation>
    <scope>NUCLEOTIDE SEQUENCE [GENOMIC RNA]</scope>
    <source>
        <strain>Cold-passage attenuated</strain>
    </source>
</reference>
<reference key="6">
    <citation type="journal article" date="1999" name="Proc. Natl. Acad. Sci. U.S.A.">
        <title>The M2-2 protein of human respiratory syncytial virus is a regulatory factor involved in the balance between RNA replication and transcription.</title>
        <authorList>
            <person name="Bermingham A."/>
            <person name="Collins P.L."/>
        </authorList>
    </citation>
    <scope>FUNCTION</scope>
</reference>
<reference key="7">
    <citation type="journal article" date="1999" name="J. Gen. Virol.">
        <title>Detection and characterization of proteins encoded by the second ORF of the M2 gene of pneumoviruses.</title>
        <authorList>
            <person name="Ahmadian G."/>
            <person name="Chambers P."/>
            <person name="Easton A.J."/>
        </authorList>
    </citation>
    <scope>SUBCELLULAR LOCATION</scope>
</reference>
<reference key="8">
    <citation type="journal article" date="2000" name="J. Virol.">
        <title>Respiratory syncytial virus that lacks open reading frame 2 of the M2 gene (M2-2) has altered growth characteristics and is attenuated in rodents.</title>
        <authorList>
            <person name="Jin H."/>
            <person name="Cheng X."/>
            <person name="Zhou H.Z."/>
            <person name="Li S."/>
            <person name="Seddiqui A."/>
        </authorList>
    </citation>
    <scope>FUNCTION</scope>
</reference>
<reference key="9">
    <citation type="journal article" date="2005" name="J. Virol.">
        <title>Overexpression of the M2-2 protein of respiratory syncytial virus inhibits viral replication.</title>
        <authorList>
            <person name="Cheng X."/>
            <person name="Park H."/>
            <person name="Zhou H."/>
            <person name="Jin H."/>
        </authorList>
    </citation>
    <scope>FUNCTION</scope>
</reference>
<reference key="10">
    <citation type="journal article" date="2016" name="Virus Res.">
        <title>Phosphorylation of the human respiratory syncytial virus P protein mediates M2-2 regulation of viral RNA synthesis, a process that involves two P proteins.</title>
        <authorList>
            <person name="Asenjo A."/>
            <person name="Villanueva N."/>
        </authorList>
    </citation>
    <scope>FUNCTION</scope>
</reference>
<proteinExistence type="inferred from homology"/>
<name>M22_HRSVA</name>
<organism>
    <name type="scientific">Human respiratory syncytial virus A (strain A2)</name>
    <dbReference type="NCBI Taxonomy" id="11259"/>
    <lineage>
        <taxon>Viruses</taxon>
        <taxon>Riboviria</taxon>
        <taxon>Orthornavirae</taxon>
        <taxon>Negarnaviricota</taxon>
        <taxon>Haploviricotina</taxon>
        <taxon>Monjiviricetes</taxon>
        <taxon>Mononegavirales</taxon>
        <taxon>Pneumoviridae</taxon>
        <taxon>Orthopneumovirus</taxon>
        <taxon>Orthopneumovirus hominis</taxon>
    </lineage>
</organism>
<gene>
    <name type="primary">M2-2</name>
</gene>
<accession>P88812</accession>
<keyword id="KW-1035">Host cytoplasm</keyword>
<keyword id="KW-0693">Viral RNA replication</keyword>
<dbReference type="EMBL" id="M11486">
    <property type="status" value="NOT_ANNOTATED_CDS"/>
    <property type="molecule type" value="Genomic_RNA"/>
</dbReference>
<dbReference type="EMBL" id="U50362">
    <property type="protein sequence ID" value="AAB86666.1"/>
    <property type="molecule type" value="Genomic_RNA"/>
</dbReference>
<dbReference type="EMBL" id="U50363">
    <property type="protein sequence ID" value="AAB86678.1"/>
    <property type="molecule type" value="Genomic_RNA"/>
</dbReference>
<dbReference type="EMBL" id="AF035006">
    <property type="protein sequence ID" value="AAC14904.1"/>
    <property type="molecule type" value="Genomic_RNA"/>
</dbReference>
<dbReference type="EMBL" id="U63644">
    <property type="protein sequence ID" value="AAC55972.1"/>
    <property type="molecule type" value="Genomic_RNA"/>
</dbReference>
<dbReference type="Reactome" id="R-HSA-9828642">
    <property type="pathway name" value="Respiratory syncytial virus genome transcription"/>
</dbReference>
<dbReference type="Reactome" id="R-HSA-9828721">
    <property type="pathway name" value="Translation of respiratory syncytial virus mRNAs"/>
</dbReference>
<dbReference type="Reactome" id="R-HSA-9834752">
    <property type="pathway name" value="Respiratory syncytial virus genome replication"/>
</dbReference>
<dbReference type="Proteomes" id="UP000007678">
    <property type="component" value="Genome"/>
</dbReference>
<dbReference type="Proteomes" id="UP000134464">
    <property type="component" value="Genome"/>
</dbReference>
<dbReference type="Proteomes" id="UP000181145">
    <property type="component" value="Genome"/>
</dbReference>
<dbReference type="Proteomes" id="UP000181262">
    <property type="component" value="Genome"/>
</dbReference>
<dbReference type="Proteomes" id="UP000181559">
    <property type="component" value="Genome"/>
</dbReference>
<dbReference type="GO" id="GO:0030430">
    <property type="term" value="C:host cell cytoplasm"/>
    <property type="evidence" value="ECO:0007669"/>
    <property type="project" value="UniProtKB-SubCell"/>
</dbReference>
<dbReference type="InterPro" id="IPR009969">
    <property type="entry name" value="Pneumo_M2-2"/>
</dbReference>
<dbReference type="Pfam" id="PF07380">
    <property type="entry name" value="Pneumo_M2"/>
    <property type="match status" value="1"/>
</dbReference>
<comment type="function">
    <text evidence="2 3 4 6">Mediates the regulatory switch from transcription to RNA replication (Probable) (PubMed:10500164). Acts late in infection by inhibiting viral transcription and up-regulating RNA replication (PubMed:16254330, PubMed:26474524). Inhibition of transcription by protein M2-2 requires phosphorylation of the phosphoprotein (PubMed:26474524).</text>
</comment>
<comment type="subcellular location">
    <subcellularLocation>
        <location evidence="1">Host cytoplasm</location>
    </subcellularLocation>
</comment>
<comment type="similarity">
    <text evidence="5">Belongs to the orthopneumovirus M2-2 protein family.</text>
</comment>
<evidence type="ECO:0000269" key="1">
    <source>
    </source>
</evidence>
<evidence type="ECO:0000269" key="2">
    <source>
    </source>
</evidence>
<evidence type="ECO:0000269" key="3">
    <source>
    </source>
</evidence>
<evidence type="ECO:0000269" key="4">
    <source>
    </source>
</evidence>
<evidence type="ECO:0000305" key="5"/>
<evidence type="ECO:0000305" key="6">
    <source>
    </source>
</evidence>
<protein>
    <recommendedName>
        <fullName>Protein M2-2</fullName>
    </recommendedName>
</protein>